<dbReference type="EC" id="6.3.4.19" evidence="1"/>
<dbReference type="EMBL" id="AE015927">
    <property type="protein sequence ID" value="AAO34851.1"/>
    <property type="molecule type" value="Genomic_DNA"/>
</dbReference>
<dbReference type="RefSeq" id="WP_011098521.1">
    <property type="nucleotide sequence ID" value="NC_004557.1"/>
</dbReference>
<dbReference type="SMR" id="Q899H5"/>
<dbReference type="STRING" id="212717.CTC_00202"/>
<dbReference type="GeneID" id="24255138"/>
<dbReference type="KEGG" id="ctc:CTC_00202"/>
<dbReference type="HOGENOM" id="CLU_018869_0_1_9"/>
<dbReference type="OrthoDB" id="9807403at2"/>
<dbReference type="Proteomes" id="UP000001412">
    <property type="component" value="Chromosome"/>
</dbReference>
<dbReference type="GO" id="GO:0005737">
    <property type="term" value="C:cytoplasm"/>
    <property type="evidence" value="ECO:0007669"/>
    <property type="project" value="UniProtKB-SubCell"/>
</dbReference>
<dbReference type="GO" id="GO:0005524">
    <property type="term" value="F:ATP binding"/>
    <property type="evidence" value="ECO:0007669"/>
    <property type="project" value="UniProtKB-UniRule"/>
</dbReference>
<dbReference type="GO" id="GO:0032267">
    <property type="term" value="F:tRNA(Ile)-lysidine synthase activity"/>
    <property type="evidence" value="ECO:0007669"/>
    <property type="project" value="UniProtKB-EC"/>
</dbReference>
<dbReference type="GO" id="GO:0006400">
    <property type="term" value="P:tRNA modification"/>
    <property type="evidence" value="ECO:0007669"/>
    <property type="project" value="UniProtKB-UniRule"/>
</dbReference>
<dbReference type="CDD" id="cd01992">
    <property type="entry name" value="TilS_N"/>
    <property type="match status" value="1"/>
</dbReference>
<dbReference type="Gene3D" id="3.30.465.60">
    <property type="match status" value="1"/>
</dbReference>
<dbReference type="Gene3D" id="3.40.50.620">
    <property type="entry name" value="HUPs"/>
    <property type="match status" value="1"/>
</dbReference>
<dbReference type="Gene3D" id="3.50.40.10">
    <property type="entry name" value="Phenylalanyl-trna Synthetase, Chain B, domain 3"/>
    <property type="match status" value="1"/>
</dbReference>
<dbReference type="HAMAP" id="MF_01161">
    <property type="entry name" value="tRNA_Ile_lys_synt"/>
    <property type="match status" value="1"/>
</dbReference>
<dbReference type="InterPro" id="IPR012796">
    <property type="entry name" value="Lysidine-tRNA-synth_C"/>
</dbReference>
<dbReference type="InterPro" id="IPR020825">
    <property type="entry name" value="Phe-tRNA_synthase-like_B3/B4"/>
</dbReference>
<dbReference type="InterPro" id="IPR014729">
    <property type="entry name" value="Rossmann-like_a/b/a_fold"/>
</dbReference>
<dbReference type="InterPro" id="IPR011063">
    <property type="entry name" value="TilS/TtcA_N"/>
</dbReference>
<dbReference type="InterPro" id="IPR012094">
    <property type="entry name" value="tRNA_Ile_lys_synt"/>
</dbReference>
<dbReference type="InterPro" id="IPR012795">
    <property type="entry name" value="tRNA_Ile_lys_synt_N"/>
</dbReference>
<dbReference type="NCBIfam" id="TIGR02433">
    <property type="entry name" value="lysidine_TilS_C"/>
    <property type="match status" value="1"/>
</dbReference>
<dbReference type="NCBIfam" id="TIGR02432">
    <property type="entry name" value="lysidine_TilS_N"/>
    <property type="match status" value="1"/>
</dbReference>
<dbReference type="PANTHER" id="PTHR43033">
    <property type="entry name" value="TRNA(ILE)-LYSIDINE SYNTHASE-RELATED"/>
    <property type="match status" value="1"/>
</dbReference>
<dbReference type="PANTHER" id="PTHR43033:SF1">
    <property type="entry name" value="TRNA(ILE)-LYSIDINE SYNTHASE-RELATED"/>
    <property type="match status" value="1"/>
</dbReference>
<dbReference type="Pfam" id="PF01171">
    <property type="entry name" value="ATP_bind_3"/>
    <property type="match status" value="1"/>
</dbReference>
<dbReference type="Pfam" id="PF11734">
    <property type="entry name" value="TilS_C"/>
    <property type="match status" value="1"/>
</dbReference>
<dbReference type="SMART" id="SM00977">
    <property type="entry name" value="TilS_C"/>
    <property type="match status" value="1"/>
</dbReference>
<dbReference type="SUPFAM" id="SSF52402">
    <property type="entry name" value="Adenine nucleotide alpha hydrolases-like"/>
    <property type="match status" value="1"/>
</dbReference>
<dbReference type="SUPFAM" id="SSF82829">
    <property type="entry name" value="MesJ substrate recognition domain-like"/>
    <property type="match status" value="1"/>
</dbReference>
<dbReference type="SUPFAM" id="SSF56037">
    <property type="entry name" value="PheT/TilS domain"/>
    <property type="match status" value="1"/>
</dbReference>
<proteinExistence type="inferred from homology"/>
<accession>Q899H5</accession>
<name>TILS_CLOTE</name>
<protein>
    <recommendedName>
        <fullName evidence="1">tRNA(Ile)-lysidine synthase</fullName>
        <ecNumber evidence="1">6.3.4.19</ecNumber>
    </recommendedName>
    <alternativeName>
        <fullName evidence="1">tRNA(Ile)-2-lysyl-cytidine synthase</fullName>
    </alternativeName>
    <alternativeName>
        <fullName evidence="1">tRNA(Ile)-lysidine synthetase</fullName>
    </alternativeName>
</protein>
<comment type="function">
    <text evidence="1">Ligates lysine onto the cytidine present at position 34 of the AUA codon-specific tRNA(Ile) that contains the anticodon CAU, in an ATP-dependent manner. Cytidine is converted to lysidine, thus changing the amino acid specificity of the tRNA from methionine to isoleucine.</text>
</comment>
<comment type="catalytic activity">
    <reaction evidence="1">
        <text>cytidine(34) in tRNA(Ile2) + L-lysine + ATP = lysidine(34) in tRNA(Ile2) + AMP + diphosphate + H(+)</text>
        <dbReference type="Rhea" id="RHEA:43744"/>
        <dbReference type="Rhea" id="RHEA-COMP:10625"/>
        <dbReference type="Rhea" id="RHEA-COMP:10670"/>
        <dbReference type="ChEBI" id="CHEBI:15378"/>
        <dbReference type="ChEBI" id="CHEBI:30616"/>
        <dbReference type="ChEBI" id="CHEBI:32551"/>
        <dbReference type="ChEBI" id="CHEBI:33019"/>
        <dbReference type="ChEBI" id="CHEBI:82748"/>
        <dbReference type="ChEBI" id="CHEBI:83665"/>
        <dbReference type="ChEBI" id="CHEBI:456215"/>
        <dbReference type="EC" id="6.3.4.19"/>
    </reaction>
</comment>
<comment type="subcellular location">
    <subcellularLocation>
        <location evidence="1">Cytoplasm</location>
    </subcellularLocation>
</comment>
<comment type="domain">
    <text>The N-terminal region contains the highly conserved SGGXDS motif, predicted to be a P-loop motif involved in ATP binding.</text>
</comment>
<comment type="similarity">
    <text evidence="1">Belongs to the tRNA(Ile)-lysidine synthase family.</text>
</comment>
<evidence type="ECO:0000255" key="1">
    <source>
        <dbReference type="HAMAP-Rule" id="MF_01161"/>
    </source>
</evidence>
<sequence length="467" mass="54646">MIDIVLNTIHKYNMINKGDKIIVGVSGGPDSMCLLHILYRLRDEYNLNIIAAHINHCLRGKDADNDEKYVENFCKKYDIDFYSTKIDVGKLAKKENISFEVAGRECRYDFFNKLKLKFNCDKIALAHNSNDQCETILMRIMRGTGIEGLAGIKAIRDNIYIRPIIEASRKQIEDYCEEHELEARIDKTNLESIYARNKVRLELIPYIQENFNQDIIAVINRMGNNIDVDREYLDFASDKKFYQFCTSTKYEVVIKKEAFLEHKAITSRIIRRSINRLKGNLYNFERVHVEDILNLQKGSTGKFITLPEKIKALNNYGDIHIFFEEFSDNKGENKEKEQILEIGNNIINSNIKVQIELTNEIHKDIMGKDVYVKYFDFDKINGNIMFRYRKDGDRFTSLGMKGSKKIKDLFIDFKIPKHLRDYVPLICFGNEIAWIVGYRISEKFKVEKNTKNILKIKIEGEKENELV</sequence>
<keyword id="KW-0067">ATP-binding</keyword>
<keyword id="KW-0963">Cytoplasm</keyword>
<keyword id="KW-0436">Ligase</keyword>
<keyword id="KW-0547">Nucleotide-binding</keyword>
<keyword id="KW-1185">Reference proteome</keyword>
<keyword id="KW-0819">tRNA processing</keyword>
<organism>
    <name type="scientific">Clostridium tetani (strain Massachusetts / E88)</name>
    <dbReference type="NCBI Taxonomy" id="212717"/>
    <lineage>
        <taxon>Bacteria</taxon>
        <taxon>Bacillati</taxon>
        <taxon>Bacillota</taxon>
        <taxon>Clostridia</taxon>
        <taxon>Eubacteriales</taxon>
        <taxon>Clostridiaceae</taxon>
        <taxon>Clostridium</taxon>
    </lineage>
</organism>
<reference key="1">
    <citation type="journal article" date="2003" name="Proc. Natl. Acad. Sci. U.S.A.">
        <title>The genome sequence of Clostridium tetani, the causative agent of tetanus disease.</title>
        <authorList>
            <person name="Brueggemann H."/>
            <person name="Baeumer S."/>
            <person name="Fricke W.F."/>
            <person name="Wiezer A."/>
            <person name="Liesegang H."/>
            <person name="Decker I."/>
            <person name="Herzberg C."/>
            <person name="Martinez-Arias R."/>
            <person name="Merkl R."/>
            <person name="Henne A."/>
            <person name="Gottschalk G."/>
        </authorList>
    </citation>
    <scope>NUCLEOTIDE SEQUENCE [LARGE SCALE GENOMIC DNA]</scope>
    <source>
        <strain>Massachusetts / E88</strain>
    </source>
</reference>
<feature type="chain" id="PRO_0000181681" description="tRNA(Ile)-lysidine synthase">
    <location>
        <begin position="1"/>
        <end position="467"/>
    </location>
</feature>
<feature type="binding site" evidence="1">
    <location>
        <begin position="26"/>
        <end position="31"/>
    </location>
    <ligand>
        <name>ATP</name>
        <dbReference type="ChEBI" id="CHEBI:30616"/>
    </ligand>
</feature>
<gene>
    <name evidence="1" type="primary">tilS</name>
    <name type="ordered locus">CTC_00202</name>
</gene>